<evidence type="ECO:0000250" key="1"/>
<evidence type="ECO:0000250" key="2">
    <source>
        <dbReference type="UniProtKB" id="Q04089"/>
    </source>
</evidence>
<evidence type="ECO:0000255" key="3">
    <source>
        <dbReference type="PROSITE-ProRule" id="PRU00902"/>
    </source>
</evidence>
<evidence type="ECO:0000256" key="4">
    <source>
        <dbReference type="SAM" id="MobiDB-lite"/>
    </source>
</evidence>
<organism>
    <name type="scientific">Aspergillus fumigatus (strain ATCC MYA-4609 / CBS 101355 / FGSC A1100 / Af293)</name>
    <name type="common">Neosartorya fumigata</name>
    <dbReference type="NCBI Taxonomy" id="330879"/>
    <lineage>
        <taxon>Eukaryota</taxon>
        <taxon>Fungi</taxon>
        <taxon>Dikarya</taxon>
        <taxon>Ascomycota</taxon>
        <taxon>Pezizomycotina</taxon>
        <taxon>Eurotiomycetes</taxon>
        <taxon>Eurotiomycetidae</taxon>
        <taxon>Eurotiales</taxon>
        <taxon>Aspergillaceae</taxon>
        <taxon>Aspergillus</taxon>
        <taxon>Aspergillus subgen. Fumigati</taxon>
    </lineage>
</organism>
<dbReference type="EC" id="2.1.1.360"/>
<dbReference type="EMBL" id="AAHF01000003">
    <property type="protein sequence ID" value="EAL91402.1"/>
    <property type="molecule type" value="Genomic_DNA"/>
</dbReference>
<dbReference type="RefSeq" id="XP_753440.1">
    <property type="nucleotide sequence ID" value="XM_748347.1"/>
</dbReference>
<dbReference type="SMR" id="Q4WVH4"/>
<dbReference type="FunCoup" id="Q4WVH4">
    <property type="interactions" value="29"/>
</dbReference>
<dbReference type="STRING" id="330879.Q4WVH4"/>
<dbReference type="EnsemblFungi" id="EAL91402">
    <property type="protein sequence ID" value="EAL91402"/>
    <property type="gene ID" value="AFUA_5G12110"/>
</dbReference>
<dbReference type="GeneID" id="3511508"/>
<dbReference type="KEGG" id="afm:AFUA_5G12110"/>
<dbReference type="VEuPathDB" id="FungiDB:Afu5g12110"/>
<dbReference type="eggNOG" id="KOG3924">
    <property type="taxonomic scope" value="Eukaryota"/>
</dbReference>
<dbReference type="HOGENOM" id="CLU_027287_2_0_1"/>
<dbReference type="InParanoid" id="Q4WVH4"/>
<dbReference type="OMA" id="VQQKNYW"/>
<dbReference type="OrthoDB" id="443402at2759"/>
<dbReference type="Proteomes" id="UP000002530">
    <property type="component" value="Chromosome 5"/>
</dbReference>
<dbReference type="GO" id="GO:0000781">
    <property type="term" value="C:chromosome, telomeric region"/>
    <property type="evidence" value="ECO:0007669"/>
    <property type="project" value="GOC"/>
</dbReference>
<dbReference type="GO" id="GO:0000786">
    <property type="term" value="C:nucleosome"/>
    <property type="evidence" value="ECO:0007669"/>
    <property type="project" value="InterPro"/>
</dbReference>
<dbReference type="GO" id="GO:0005634">
    <property type="term" value="C:nucleus"/>
    <property type="evidence" value="ECO:0000318"/>
    <property type="project" value="GO_Central"/>
</dbReference>
<dbReference type="GO" id="GO:0042393">
    <property type="term" value="F:histone binding"/>
    <property type="evidence" value="ECO:0007669"/>
    <property type="project" value="InterPro"/>
</dbReference>
<dbReference type="GO" id="GO:0031151">
    <property type="term" value="F:histone H3K79 methyltransferase activity"/>
    <property type="evidence" value="ECO:0000318"/>
    <property type="project" value="GO_Central"/>
</dbReference>
<dbReference type="GO" id="GO:0140956">
    <property type="term" value="F:histone H3K79 trimethyltransferase activity"/>
    <property type="evidence" value="ECO:0007669"/>
    <property type="project" value="UniProtKB-EC"/>
</dbReference>
<dbReference type="GO" id="GO:0000077">
    <property type="term" value="P:DNA damage checkpoint signaling"/>
    <property type="evidence" value="ECO:0000318"/>
    <property type="project" value="GO_Central"/>
</dbReference>
<dbReference type="GO" id="GO:0006281">
    <property type="term" value="P:DNA repair"/>
    <property type="evidence" value="ECO:0000318"/>
    <property type="project" value="GO_Central"/>
</dbReference>
<dbReference type="GO" id="GO:0032259">
    <property type="term" value="P:methylation"/>
    <property type="evidence" value="ECO:0007669"/>
    <property type="project" value="UniProtKB-KW"/>
</dbReference>
<dbReference type="GO" id="GO:0031509">
    <property type="term" value="P:subtelomeric heterochromatin formation"/>
    <property type="evidence" value="ECO:0000318"/>
    <property type="project" value="GO_Central"/>
</dbReference>
<dbReference type="CDD" id="cd02440">
    <property type="entry name" value="AdoMet_MTases"/>
    <property type="match status" value="1"/>
</dbReference>
<dbReference type="FunFam" id="3.40.50.150:FF:000033">
    <property type="entry name" value="Histone-lysine N-methyltransferase, H3 lysine-79 specific"/>
    <property type="match status" value="1"/>
</dbReference>
<dbReference type="Gene3D" id="1.10.260.170">
    <property type="match status" value="1"/>
</dbReference>
<dbReference type="Gene3D" id="3.40.50.150">
    <property type="entry name" value="Vaccinia Virus protein VP39"/>
    <property type="match status" value="1"/>
</dbReference>
<dbReference type="InterPro" id="IPR021162">
    <property type="entry name" value="Dot1"/>
</dbReference>
<dbReference type="InterPro" id="IPR025789">
    <property type="entry name" value="DOT1_dom"/>
</dbReference>
<dbReference type="InterPro" id="IPR030445">
    <property type="entry name" value="H3-K79_meTrfase"/>
</dbReference>
<dbReference type="InterPro" id="IPR029063">
    <property type="entry name" value="SAM-dependent_MTases_sf"/>
</dbReference>
<dbReference type="PANTHER" id="PTHR21451">
    <property type="entry name" value="HISTONE H3 METHYLTRANSFERASE"/>
    <property type="match status" value="1"/>
</dbReference>
<dbReference type="PANTHER" id="PTHR21451:SF0">
    <property type="entry name" value="HISTONE-LYSINE N-METHYLTRANSFERASE, H3 LYSINE-79 SPECIFIC"/>
    <property type="match status" value="1"/>
</dbReference>
<dbReference type="Pfam" id="PF08123">
    <property type="entry name" value="DOT1"/>
    <property type="match status" value="1"/>
</dbReference>
<dbReference type="PIRSF" id="PIRSF017570">
    <property type="entry name" value="Histone_H3-K79_MeTrfase"/>
    <property type="match status" value="1"/>
</dbReference>
<dbReference type="SUPFAM" id="SSF53335">
    <property type="entry name" value="S-adenosyl-L-methionine-dependent methyltransferases"/>
    <property type="match status" value="1"/>
</dbReference>
<dbReference type="PROSITE" id="PS51569">
    <property type="entry name" value="DOT1"/>
    <property type="match status" value="1"/>
</dbReference>
<reference key="1">
    <citation type="journal article" date="2005" name="Nature">
        <title>Genomic sequence of the pathogenic and allergenic filamentous fungus Aspergillus fumigatus.</title>
        <authorList>
            <person name="Nierman W.C."/>
            <person name="Pain A."/>
            <person name="Anderson M.J."/>
            <person name="Wortman J.R."/>
            <person name="Kim H.S."/>
            <person name="Arroyo J."/>
            <person name="Berriman M."/>
            <person name="Abe K."/>
            <person name="Archer D.B."/>
            <person name="Bermejo C."/>
            <person name="Bennett J.W."/>
            <person name="Bowyer P."/>
            <person name="Chen D."/>
            <person name="Collins M."/>
            <person name="Coulsen R."/>
            <person name="Davies R."/>
            <person name="Dyer P.S."/>
            <person name="Farman M.L."/>
            <person name="Fedorova N."/>
            <person name="Fedorova N.D."/>
            <person name="Feldblyum T.V."/>
            <person name="Fischer R."/>
            <person name="Fosker N."/>
            <person name="Fraser A."/>
            <person name="Garcia J.L."/>
            <person name="Garcia M.J."/>
            <person name="Goble A."/>
            <person name="Goldman G.H."/>
            <person name="Gomi K."/>
            <person name="Griffith-Jones S."/>
            <person name="Gwilliam R."/>
            <person name="Haas B.J."/>
            <person name="Haas H."/>
            <person name="Harris D.E."/>
            <person name="Horiuchi H."/>
            <person name="Huang J."/>
            <person name="Humphray S."/>
            <person name="Jimenez J."/>
            <person name="Keller N."/>
            <person name="Khouri H."/>
            <person name="Kitamoto K."/>
            <person name="Kobayashi T."/>
            <person name="Konzack S."/>
            <person name="Kulkarni R."/>
            <person name="Kumagai T."/>
            <person name="Lafton A."/>
            <person name="Latge J.-P."/>
            <person name="Li W."/>
            <person name="Lord A."/>
            <person name="Lu C."/>
            <person name="Majoros W.H."/>
            <person name="May G.S."/>
            <person name="Miller B.L."/>
            <person name="Mohamoud Y."/>
            <person name="Molina M."/>
            <person name="Monod M."/>
            <person name="Mouyna I."/>
            <person name="Mulligan S."/>
            <person name="Murphy L.D."/>
            <person name="O'Neil S."/>
            <person name="Paulsen I."/>
            <person name="Penalva M.A."/>
            <person name="Pertea M."/>
            <person name="Price C."/>
            <person name="Pritchard B.L."/>
            <person name="Quail M.A."/>
            <person name="Rabbinowitsch E."/>
            <person name="Rawlins N."/>
            <person name="Rajandream M.A."/>
            <person name="Reichard U."/>
            <person name="Renauld H."/>
            <person name="Robson G.D."/>
            <person name="Rodriguez de Cordoba S."/>
            <person name="Rodriguez-Pena J.M."/>
            <person name="Ronning C.M."/>
            <person name="Rutter S."/>
            <person name="Salzberg S.L."/>
            <person name="Sanchez M."/>
            <person name="Sanchez-Ferrero J.C."/>
            <person name="Saunders D."/>
            <person name="Seeger K."/>
            <person name="Squares R."/>
            <person name="Squares S."/>
            <person name="Takeuchi M."/>
            <person name="Tekaia F."/>
            <person name="Turner G."/>
            <person name="Vazquez de Aldana C.R."/>
            <person name="Weidman J."/>
            <person name="White O."/>
            <person name="Woodward J.R."/>
            <person name="Yu J.-H."/>
            <person name="Fraser C.M."/>
            <person name="Galagan J.E."/>
            <person name="Asai K."/>
            <person name="Machida M."/>
            <person name="Hall N."/>
            <person name="Barrell B.G."/>
            <person name="Denning D.W."/>
        </authorList>
    </citation>
    <scope>NUCLEOTIDE SEQUENCE [LARGE SCALE GENOMIC DNA]</scope>
    <source>
        <strain>ATCC MYA-4609 / CBS 101355 / FGSC A1100 / Af293</strain>
    </source>
</reference>
<keyword id="KW-0156">Chromatin regulator</keyword>
<keyword id="KW-0489">Methyltransferase</keyword>
<keyword id="KW-0539">Nucleus</keyword>
<keyword id="KW-1185">Reference proteome</keyword>
<keyword id="KW-0677">Repeat</keyword>
<keyword id="KW-0949">S-adenosyl-L-methionine</keyword>
<keyword id="KW-0804">Transcription</keyword>
<keyword id="KW-0805">Transcription regulation</keyword>
<keyword id="KW-0808">Transferase</keyword>
<sequence length="502" mass="56798">MGFFDHLQKGGAFSLQAQKPQIRKVVQTRPPPPSRSSSHTPVRSLSQTSPPGRVKRPRDSTSRSVSRDPDHRPSKRLSTPLRNRKRPTPEQRFSSDDDASDTDTSFELRKRARTEDSAEPDLARRIRSLKAFSEENVKPLPLVHAADITSKQKAGNFRRAFGGADRPTEILLQYPSASLKERFNLVVPRDNDDFKPIDDIVHVIDIVSENYIPESEADFFNNESTGIKRRLRRALAHSSETEFREAVASYNREIERLRRSGAIAKHLDATHRLNLPLVERILTQIYARTVSPRVESLRRYENGTDNVYGELLPRFISTIFKETRLKSGHVFVDLGSGVGNVVLQAALEIGCESWGCEMMANACDLAELQQTEFRARCRLWGIAPGKTNLVRGDFLQEQSIIDVLKRADVVLINNQAFTPQLNNEIINHFLDMKEGCQIVSLKSFVPAGHKIQSRNLYSPINLLKVKQLNYWSNSVSWTDVGGTYFIATKDSSRLKAFADSME</sequence>
<feature type="chain" id="PRO_0000270604" description="Histone-lysine N-methyltransferase, H3 lysine-79 specific">
    <location>
        <begin position="1"/>
        <end position="502"/>
    </location>
</feature>
<feature type="domain" description="DOT1" evidence="3">
    <location>
        <begin position="181"/>
        <end position="502"/>
    </location>
</feature>
<feature type="region of interest" description="Disordered" evidence="4">
    <location>
        <begin position="1"/>
        <end position="121"/>
    </location>
</feature>
<feature type="compositionally biased region" description="Low complexity" evidence="4">
    <location>
        <begin position="35"/>
        <end position="46"/>
    </location>
</feature>
<feature type="compositionally biased region" description="Basic and acidic residues" evidence="4">
    <location>
        <begin position="57"/>
        <end position="72"/>
    </location>
</feature>
<feature type="compositionally biased region" description="Basic and acidic residues" evidence="4">
    <location>
        <begin position="106"/>
        <end position="121"/>
    </location>
</feature>
<feature type="binding site" evidence="3">
    <location>
        <begin position="308"/>
        <end position="311"/>
    </location>
    <ligand>
        <name>S-adenosyl-L-methionine</name>
        <dbReference type="ChEBI" id="CHEBI:59789"/>
    </ligand>
</feature>
<feature type="binding site" evidence="3">
    <location>
        <begin position="331"/>
        <end position="340"/>
    </location>
    <ligand>
        <name>S-adenosyl-L-methionine</name>
        <dbReference type="ChEBI" id="CHEBI:59789"/>
    </ligand>
</feature>
<feature type="binding site" evidence="3">
    <location>
        <position position="357"/>
    </location>
    <ligand>
        <name>S-adenosyl-L-methionine</name>
        <dbReference type="ChEBI" id="CHEBI:59789"/>
    </ligand>
</feature>
<feature type="binding site" evidence="3">
    <location>
        <begin position="393"/>
        <end position="394"/>
    </location>
    <ligand>
        <name>S-adenosyl-L-methionine</name>
        <dbReference type="ChEBI" id="CHEBI:59789"/>
    </ligand>
</feature>
<proteinExistence type="inferred from homology"/>
<accession>Q4WVH4</accession>
<name>DOT1_ASPFU</name>
<comment type="function">
    <text evidence="2">Histone methyltransferase that specifically trimethylates histone H3 to form H3K79me3. This methylation is required for telomere silencing and for the pachytene checkpoint during the meiotic cell cycle by allowing the recruitment of RAD9 to double strand breaks. Nucleosomes are preferred as substrate compared to free histone.</text>
</comment>
<comment type="catalytic activity">
    <reaction evidence="2 3">
        <text>L-lysyl(79)-[histone H3] + 3 S-adenosyl-L-methionine = N(6),N(6),N(6)-trimethyl-L-lysyl(79)-[histone H3] + 3 S-adenosyl-L-homocysteine + 3 H(+)</text>
        <dbReference type="Rhea" id="RHEA:60328"/>
        <dbReference type="Rhea" id="RHEA-COMP:15549"/>
        <dbReference type="Rhea" id="RHEA-COMP:15552"/>
        <dbReference type="ChEBI" id="CHEBI:15378"/>
        <dbReference type="ChEBI" id="CHEBI:29969"/>
        <dbReference type="ChEBI" id="CHEBI:57856"/>
        <dbReference type="ChEBI" id="CHEBI:59789"/>
        <dbReference type="ChEBI" id="CHEBI:61961"/>
        <dbReference type="EC" id="2.1.1.360"/>
    </reaction>
</comment>
<comment type="activity regulation">
    <text evidence="1">Ubiquitination of histone H2B to form H2BK123ub1 is required for efficient DOT1 methyltransferase activity on histone H3.</text>
</comment>
<comment type="subcellular location">
    <subcellularLocation>
        <location evidence="1">Nucleus</location>
    </subcellularLocation>
</comment>
<comment type="miscellaneous">
    <text>In contrast to other lysine histone methyltransferases, it does not contain a SET domain, suggesting the existence of another mechanism for methylation of lysine residues of histones.</text>
</comment>
<comment type="similarity">
    <text evidence="3">Belongs to the class I-like SAM-binding methyltransferase superfamily. DOT1 family.</text>
</comment>
<gene>
    <name type="primary">dot1</name>
    <name type="ORF">AFUA_5G12110</name>
</gene>
<protein>
    <recommendedName>
        <fullName>Histone-lysine N-methyltransferase, H3 lysine-79 specific</fullName>
        <ecNumber>2.1.1.360</ecNumber>
    </recommendedName>
    <alternativeName>
        <fullName>Histone H3-K79 methyltransferase</fullName>
        <shortName>H3-K79-HMTase</shortName>
    </alternativeName>
</protein>